<proteinExistence type="inferred from homology"/>
<name>ULAD_ECOSE</name>
<sequence length="216" mass="23578">MSLPMLQVALDNQTMDSAYETTRLIAEEVDIIEVGTILCVGEGVRAVRDLKALYPHKIVLADAKIADAGKILSRMCFEANADWVTVICCADINTAKGALDVAKEFNGDVQIELTGYWTWEQAQQWRDAGIGQVVYHRSRDAQAAGVAWGEADITAIKRLSDMGFKVTVTGGLALEDLPLFKGIPIHVFIAGRSIRDAASPVEAARQFKRSIAELWG</sequence>
<gene>
    <name evidence="1" type="primary">ulaD</name>
    <name type="ordered locus">ECSE_4494</name>
</gene>
<reference key="1">
    <citation type="journal article" date="2008" name="DNA Res.">
        <title>Complete genome sequence and comparative analysis of the wild-type commensal Escherichia coli strain SE11 isolated from a healthy adult.</title>
        <authorList>
            <person name="Oshima K."/>
            <person name="Toh H."/>
            <person name="Ogura Y."/>
            <person name="Sasamoto H."/>
            <person name="Morita H."/>
            <person name="Park S.-H."/>
            <person name="Ooka T."/>
            <person name="Iyoda S."/>
            <person name="Taylor T.D."/>
            <person name="Hayashi T."/>
            <person name="Itoh K."/>
            <person name="Hattori M."/>
        </authorList>
    </citation>
    <scope>NUCLEOTIDE SEQUENCE [LARGE SCALE GENOMIC DNA]</scope>
    <source>
        <strain>SE11</strain>
    </source>
</reference>
<organism>
    <name type="scientific">Escherichia coli (strain SE11)</name>
    <dbReference type="NCBI Taxonomy" id="409438"/>
    <lineage>
        <taxon>Bacteria</taxon>
        <taxon>Pseudomonadati</taxon>
        <taxon>Pseudomonadota</taxon>
        <taxon>Gammaproteobacteria</taxon>
        <taxon>Enterobacterales</taxon>
        <taxon>Enterobacteriaceae</taxon>
        <taxon>Escherichia</taxon>
    </lineage>
</organism>
<protein>
    <recommendedName>
        <fullName evidence="1">3-keto-L-gulonate-6-phosphate decarboxylase UlaD</fullName>
        <ecNumber evidence="1">4.1.1.85</ecNumber>
    </recommendedName>
    <alternativeName>
        <fullName evidence="1">3-dehydro-L-gulonate-6-phosphate decarboxylase</fullName>
    </alternativeName>
    <alternativeName>
        <fullName evidence="1">KGPDC</fullName>
    </alternativeName>
    <alternativeName>
        <fullName evidence="1">L-ascorbate utilization protein D</fullName>
    </alternativeName>
</protein>
<evidence type="ECO:0000255" key="1">
    <source>
        <dbReference type="HAMAP-Rule" id="MF_01267"/>
    </source>
</evidence>
<feature type="chain" id="PRO_1000140115" description="3-keto-L-gulonate-6-phosphate decarboxylase UlaD">
    <location>
        <begin position="1"/>
        <end position="216"/>
    </location>
</feature>
<feature type="binding site" evidence="1">
    <location>
        <position position="11"/>
    </location>
    <ligand>
        <name>substrate</name>
    </ligand>
</feature>
<feature type="binding site" evidence="1">
    <location>
        <position position="33"/>
    </location>
    <ligand>
        <name>Mg(2+)</name>
        <dbReference type="ChEBI" id="CHEBI:18420"/>
    </ligand>
</feature>
<feature type="binding site" evidence="1">
    <location>
        <position position="62"/>
    </location>
    <ligand>
        <name>Mg(2+)</name>
        <dbReference type="ChEBI" id="CHEBI:18420"/>
    </ligand>
</feature>
<feature type="binding site" evidence="1">
    <location>
        <position position="192"/>
    </location>
    <ligand>
        <name>substrate</name>
    </ligand>
</feature>
<feature type="site" description="Transition state stabilizer" evidence="1">
    <location>
        <position position="64"/>
    </location>
</feature>
<feature type="site" description="Transition state stabilizer" evidence="1">
    <location>
        <position position="67"/>
    </location>
</feature>
<accession>B6I2A1</accession>
<comment type="function">
    <text evidence="1">Catalyzes the decarboxylation of 3-keto-L-gulonate-6-P into L-xylulose-5-P. Is involved in the anaerobic L-ascorbate utilization.</text>
</comment>
<comment type="catalytic activity">
    <reaction evidence="1">
        <text>3-dehydro-L-gulonate 6-phosphate + H(+) = L-xylulose 5-phosphate + CO2</text>
        <dbReference type="Rhea" id="RHEA:14353"/>
        <dbReference type="ChEBI" id="CHEBI:15378"/>
        <dbReference type="ChEBI" id="CHEBI:16526"/>
        <dbReference type="ChEBI" id="CHEBI:57829"/>
        <dbReference type="ChEBI" id="CHEBI:58774"/>
        <dbReference type="EC" id="4.1.1.85"/>
    </reaction>
</comment>
<comment type="cofactor">
    <cofactor evidence="1">
        <name>Mg(2+)</name>
        <dbReference type="ChEBI" id="CHEBI:18420"/>
    </cofactor>
    <text evidence="1">Binds 1 Mg(2+) ion per subunit.</text>
</comment>
<comment type="pathway">
    <text evidence="1">Cofactor degradation; L-ascorbate degradation; D-xylulose 5-phosphate from L-ascorbate: step 2/4.</text>
</comment>
<comment type="subunit">
    <text evidence="1">Homodimer.</text>
</comment>
<comment type="induction">
    <text evidence="1">Induced by L-ascorbate. Repressed by UlaR.</text>
</comment>
<comment type="similarity">
    <text evidence="1">Belongs to the HPS/KGPDC family. KGPDC subfamily.</text>
</comment>
<keyword id="KW-0119">Carbohydrate metabolism</keyword>
<keyword id="KW-0210">Decarboxylase</keyword>
<keyword id="KW-0456">Lyase</keyword>
<keyword id="KW-0460">Magnesium</keyword>
<keyword id="KW-0479">Metal-binding</keyword>
<dbReference type="EC" id="4.1.1.85" evidence="1"/>
<dbReference type="EMBL" id="AP009240">
    <property type="protein sequence ID" value="BAG80018.1"/>
    <property type="molecule type" value="Genomic_DNA"/>
</dbReference>
<dbReference type="RefSeq" id="WP_000056749.1">
    <property type="nucleotide sequence ID" value="NC_011415.1"/>
</dbReference>
<dbReference type="SMR" id="B6I2A1"/>
<dbReference type="KEGG" id="ecy:ECSE_4494"/>
<dbReference type="HOGENOM" id="CLU_081825_0_0_6"/>
<dbReference type="UniPathway" id="UPA00263">
    <property type="reaction ID" value="UER00378"/>
</dbReference>
<dbReference type="Proteomes" id="UP000008199">
    <property type="component" value="Chromosome"/>
</dbReference>
<dbReference type="GO" id="GO:0033982">
    <property type="term" value="F:3-dehydro-L-gulonate-6-phosphate decarboxylase activity"/>
    <property type="evidence" value="ECO:0007669"/>
    <property type="project" value="UniProtKB-EC"/>
</dbReference>
<dbReference type="GO" id="GO:0000287">
    <property type="term" value="F:magnesium ion binding"/>
    <property type="evidence" value="ECO:0007669"/>
    <property type="project" value="UniProtKB-UniRule"/>
</dbReference>
<dbReference type="GO" id="GO:0004590">
    <property type="term" value="F:orotidine-5'-phosphate decarboxylase activity"/>
    <property type="evidence" value="ECO:0007669"/>
    <property type="project" value="InterPro"/>
</dbReference>
<dbReference type="GO" id="GO:0006207">
    <property type="term" value="P:'de novo' pyrimidine nucleobase biosynthetic process"/>
    <property type="evidence" value="ECO:0007669"/>
    <property type="project" value="InterPro"/>
</dbReference>
<dbReference type="GO" id="GO:0019854">
    <property type="term" value="P:L-ascorbic acid catabolic process"/>
    <property type="evidence" value="ECO:0007669"/>
    <property type="project" value="UniProtKB-UniRule"/>
</dbReference>
<dbReference type="CDD" id="cd04726">
    <property type="entry name" value="KGPDC_HPS"/>
    <property type="match status" value="1"/>
</dbReference>
<dbReference type="FunFam" id="3.20.20.70:FF:000022">
    <property type="entry name" value="3-keto-L-gulonate-6-phosphate decarboxylase UlaD"/>
    <property type="match status" value="1"/>
</dbReference>
<dbReference type="Gene3D" id="3.20.20.70">
    <property type="entry name" value="Aldolase class I"/>
    <property type="match status" value="1"/>
</dbReference>
<dbReference type="HAMAP" id="MF_01267">
    <property type="entry name" value="UlaD"/>
    <property type="match status" value="1"/>
</dbReference>
<dbReference type="InterPro" id="IPR023942">
    <property type="entry name" value="3-keto-L-gulonate6Pdecase_UlaD"/>
</dbReference>
<dbReference type="InterPro" id="IPR013785">
    <property type="entry name" value="Aldolase_TIM"/>
</dbReference>
<dbReference type="InterPro" id="IPR041710">
    <property type="entry name" value="HPS/KGPDC"/>
</dbReference>
<dbReference type="InterPro" id="IPR001754">
    <property type="entry name" value="OMPdeCOase_dom"/>
</dbReference>
<dbReference type="InterPro" id="IPR011060">
    <property type="entry name" value="RibuloseP-bd_barrel"/>
</dbReference>
<dbReference type="NCBIfam" id="NF009832">
    <property type="entry name" value="PRK13306.1"/>
    <property type="match status" value="1"/>
</dbReference>
<dbReference type="PANTHER" id="PTHR35039">
    <property type="entry name" value="3-KETO-L-GULONATE-6-PHOSPHATE DECARBOXYLASE SGBH-RELATED"/>
    <property type="match status" value="1"/>
</dbReference>
<dbReference type="PANTHER" id="PTHR35039:SF3">
    <property type="entry name" value="3-KETO-L-GULONATE-6-PHOSPHATE DECARBOXYLASE SGBH-RELATED"/>
    <property type="match status" value="1"/>
</dbReference>
<dbReference type="Pfam" id="PF00215">
    <property type="entry name" value="OMPdecase"/>
    <property type="match status" value="1"/>
</dbReference>
<dbReference type="SMART" id="SM00934">
    <property type="entry name" value="OMPdecase"/>
    <property type="match status" value="1"/>
</dbReference>
<dbReference type="SUPFAM" id="SSF51366">
    <property type="entry name" value="Ribulose-phoshate binding barrel"/>
    <property type="match status" value="1"/>
</dbReference>